<organism>
    <name type="scientific">Bacillus cereus (strain ATCC 10987 / NRS 248)</name>
    <dbReference type="NCBI Taxonomy" id="222523"/>
    <lineage>
        <taxon>Bacteria</taxon>
        <taxon>Bacillati</taxon>
        <taxon>Bacillota</taxon>
        <taxon>Bacilli</taxon>
        <taxon>Bacillales</taxon>
        <taxon>Bacillaceae</taxon>
        <taxon>Bacillus</taxon>
        <taxon>Bacillus cereus group</taxon>
    </lineage>
</organism>
<evidence type="ECO:0000255" key="1">
    <source>
        <dbReference type="HAMAP-Rule" id="MF_01512"/>
    </source>
</evidence>
<evidence type="ECO:0000255" key="2">
    <source>
        <dbReference type="PROSITE-ProRule" id="PRU01163"/>
    </source>
</evidence>
<evidence type="ECO:0007829" key="3">
    <source>
        <dbReference type="PDB" id="4JH2"/>
    </source>
</evidence>
<evidence type="ECO:0007829" key="4">
    <source>
        <dbReference type="PDB" id="4JH3"/>
    </source>
</evidence>
<evidence type="ECO:0007829" key="5">
    <source>
        <dbReference type="PDB" id="4JH8"/>
    </source>
</evidence>
<keyword id="KW-0002">3D-structure</keyword>
<keyword id="KW-0046">Antibiotic resistance</keyword>
<keyword id="KW-0963">Cytoplasm</keyword>
<keyword id="KW-0460">Magnesium</keyword>
<keyword id="KW-0479">Metal-binding</keyword>
<keyword id="KW-0808">Transferase</keyword>
<comment type="function">
    <text evidence="1">Metallothiol transferase which confers resistance to fosfomycin by catalyzing the addition of a thiol cofactor to fosfomycin. L-cysteine is probably the physiological thiol donor.</text>
</comment>
<comment type="cofactor">
    <cofactor evidence="1">
        <name>Mg(2+)</name>
        <dbReference type="ChEBI" id="CHEBI:18420"/>
    </cofactor>
</comment>
<comment type="subunit">
    <text evidence="1">Homodimer.</text>
</comment>
<comment type="subcellular location">
    <subcellularLocation>
        <location evidence="1">Cytoplasm</location>
    </subcellularLocation>
</comment>
<comment type="similarity">
    <text evidence="1">Belongs to the fosfomycin resistance protein family. FosB subfamily.</text>
</comment>
<dbReference type="EC" id="2.5.1.-" evidence="1"/>
<dbReference type="EMBL" id="AE017194">
    <property type="protein sequence ID" value="AAS41032.1"/>
    <property type="molecule type" value="Genomic_DNA"/>
</dbReference>
<dbReference type="PDB" id="4JH1">
    <property type="method" value="X-ray"/>
    <property type="resolution" value="1.55 A"/>
    <property type="chains" value="A/B=1-138"/>
</dbReference>
<dbReference type="PDB" id="4JH2">
    <property type="method" value="X-ray"/>
    <property type="resolution" value="1.27 A"/>
    <property type="chains" value="A/B=1-138"/>
</dbReference>
<dbReference type="PDB" id="4JH3">
    <property type="method" value="X-ray"/>
    <property type="resolution" value="1.50 A"/>
    <property type="chains" value="A/B=1-138"/>
</dbReference>
<dbReference type="PDB" id="4JH4">
    <property type="method" value="X-ray"/>
    <property type="resolution" value="1.90 A"/>
    <property type="chains" value="A/B=1-138"/>
</dbReference>
<dbReference type="PDB" id="4JH5">
    <property type="method" value="X-ray"/>
    <property type="resolution" value="1.77 A"/>
    <property type="chains" value="A/B=1-138"/>
</dbReference>
<dbReference type="PDB" id="4JH6">
    <property type="method" value="X-ray"/>
    <property type="resolution" value="1.32 A"/>
    <property type="chains" value="A/B=1-138"/>
</dbReference>
<dbReference type="PDB" id="4JH7">
    <property type="method" value="X-ray"/>
    <property type="resolution" value="1.55 A"/>
    <property type="chains" value="A/B=1-138"/>
</dbReference>
<dbReference type="PDB" id="4JH8">
    <property type="method" value="X-ray"/>
    <property type="resolution" value="1.41 A"/>
    <property type="chains" value="A/B=1-138"/>
</dbReference>
<dbReference type="PDB" id="4JH9">
    <property type="method" value="X-ray"/>
    <property type="resolution" value="1.77 A"/>
    <property type="chains" value="A/B=1-138"/>
</dbReference>
<dbReference type="PDB" id="8DTD">
    <property type="method" value="X-ray"/>
    <property type="resolution" value="1.95 A"/>
    <property type="chains" value="A/B=1-138"/>
</dbReference>
<dbReference type="PDB" id="8E7Q">
    <property type="method" value="X-ray"/>
    <property type="resolution" value="1.90 A"/>
    <property type="chains" value="A/B=1-138"/>
</dbReference>
<dbReference type="PDB" id="8E7R">
    <property type="method" value="X-ray"/>
    <property type="resolution" value="1.98 A"/>
    <property type="chains" value="A/B=1-138"/>
</dbReference>
<dbReference type="PDB" id="8G7F">
    <property type="method" value="X-ray"/>
    <property type="resolution" value="2.04 A"/>
    <property type="chains" value="A/B=1-138"/>
</dbReference>
<dbReference type="PDB" id="8G7G">
    <property type="method" value="X-ray"/>
    <property type="resolution" value="2.23 A"/>
    <property type="chains" value="A/B=1-138"/>
</dbReference>
<dbReference type="PDB" id="8G7H">
    <property type="method" value="X-ray"/>
    <property type="resolution" value="1.81 A"/>
    <property type="chains" value="A/B=1-138"/>
</dbReference>
<dbReference type="PDB" id="8G7I">
    <property type="method" value="X-ray"/>
    <property type="resolution" value="1.83 A"/>
    <property type="chains" value="A/B=1-138"/>
</dbReference>
<dbReference type="PDBsum" id="4JH1"/>
<dbReference type="PDBsum" id="4JH2"/>
<dbReference type="PDBsum" id="4JH3"/>
<dbReference type="PDBsum" id="4JH4"/>
<dbReference type="PDBsum" id="4JH5"/>
<dbReference type="PDBsum" id="4JH6"/>
<dbReference type="PDBsum" id="4JH7"/>
<dbReference type="PDBsum" id="4JH8"/>
<dbReference type="PDBsum" id="4JH9"/>
<dbReference type="PDBsum" id="8DTD"/>
<dbReference type="PDBsum" id="8E7Q"/>
<dbReference type="PDBsum" id="8E7R"/>
<dbReference type="PDBsum" id="8G7F"/>
<dbReference type="PDBsum" id="8G7G"/>
<dbReference type="PDBsum" id="8G7H"/>
<dbReference type="PDBsum" id="8G7I"/>
<dbReference type="SMR" id="Q739M9"/>
<dbReference type="KEGG" id="bca:BCE_2111"/>
<dbReference type="HOGENOM" id="CLU_121356_0_0_9"/>
<dbReference type="EvolutionaryTrace" id="Q739M9"/>
<dbReference type="Proteomes" id="UP000002527">
    <property type="component" value="Chromosome"/>
</dbReference>
<dbReference type="GO" id="GO:0005737">
    <property type="term" value="C:cytoplasm"/>
    <property type="evidence" value="ECO:0007669"/>
    <property type="project" value="UniProtKB-SubCell"/>
</dbReference>
<dbReference type="GO" id="GO:0000287">
    <property type="term" value="F:magnesium ion binding"/>
    <property type="evidence" value="ECO:0007669"/>
    <property type="project" value="UniProtKB-UniRule"/>
</dbReference>
<dbReference type="GO" id="GO:0016765">
    <property type="term" value="F:transferase activity, transferring alkyl or aryl (other than methyl) groups"/>
    <property type="evidence" value="ECO:0007669"/>
    <property type="project" value="UniProtKB-UniRule"/>
</dbReference>
<dbReference type="GO" id="GO:0046677">
    <property type="term" value="P:response to antibiotic"/>
    <property type="evidence" value="ECO:0007669"/>
    <property type="project" value="UniProtKB-UniRule"/>
</dbReference>
<dbReference type="FunFam" id="3.10.180.10:FF:000015">
    <property type="entry name" value="Metallothiol transferase FosB"/>
    <property type="match status" value="1"/>
</dbReference>
<dbReference type="Gene3D" id="3.10.180.10">
    <property type="entry name" value="2,3-Dihydroxybiphenyl 1,2-Dioxygenase, domain 1"/>
    <property type="match status" value="1"/>
</dbReference>
<dbReference type="HAMAP" id="MF_01512">
    <property type="entry name" value="FosB"/>
    <property type="match status" value="1"/>
</dbReference>
<dbReference type="InterPro" id="IPR051332">
    <property type="entry name" value="Fosfomycin_Res_Enzymes"/>
</dbReference>
<dbReference type="InterPro" id="IPR029068">
    <property type="entry name" value="Glyas_Bleomycin-R_OHBP_Dase"/>
</dbReference>
<dbReference type="InterPro" id="IPR004360">
    <property type="entry name" value="Glyas_Fos-R_dOase_dom"/>
</dbReference>
<dbReference type="InterPro" id="IPR022858">
    <property type="entry name" value="Metallothiol_Trafse_FosB"/>
</dbReference>
<dbReference type="InterPro" id="IPR037523">
    <property type="entry name" value="VOC"/>
</dbReference>
<dbReference type="NCBIfam" id="NF000493">
    <property type="entry name" value="Fos_BSH"/>
    <property type="match status" value="1"/>
</dbReference>
<dbReference type="NCBIfam" id="NF041541">
    <property type="entry name" value="fosBx1_fam"/>
    <property type="match status" value="1"/>
</dbReference>
<dbReference type="NCBIfam" id="NF003152">
    <property type="entry name" value="PRK04101.1"/>
    <property type="match status" value="1"/>
</dbReference>
<dbReference type="PANTHER" id="PTHR36113:SF6">
    <property type="entry name" value="FOSFOMYCIN RESISTANCE PROTEIN FOSX"/>
    <property type="match status" value="1"/>
</dbReference>
<dbReference type="PANTHER" id="PTHR36113">
    <property type="entry name" value="LYASE, PUTATIVE-RELATED-RELATED"/>
    <property type="match status" value="1"/>
</dbReference>
<dbReference type="Pfam" id="PF00903">
    <property type="entry name" value="Glyoxalase"/>
    <property type="match status" value="1"/>
</dbReference>
<dbReference type="SUPFAM" id="SSF54593">
    <property type="entry name" value="Glyoxalase/Bleomycin resistance protein/Dihydroxybiphenyl dioxygenase"/>
    <property type="match status" value="1"/>
</dbReference>
<dbReference type="PROSITE" id="PS51819">
    <property type="entry name" value="VOC"/>
    <property type="match status" value="1"/>
</dbReference>
<feature type="chain" id="PRO_0000164025" description="Metallothiol transferase FosB">
    <location>
        <begin position="1"/>
        <end position="138"/>
    </location>
</feature>
<feature type="domain" description="VOC" evidence="2">
    <location>
        <begin position="4"/>
        <end position="119"/>
    </location>
</feature>
<feature type="active site" description="Proton donor/acceptor" evidence="2">
    <location>
        <position position="115"/>
    </location>
</feature>
<feature type="binding site" evidence="1">
    <location>
        <position position="7"/>
    </location>
    <ligand>
        <name>Mg(2+)</name>
        <dbReference type="ChEBI" id="CHEBI:18420"/>
    </ligand>
</feature>
<feature type="binding site" evidence="1">
    <location>
        <position position="66"/>
    </location>
    <ligand>
        <name>Mg(2+)</name>
        <dbReference type="ChEBI" id="CHEBI:18420"/>
    </ligand>
</feature>
<feature type="binding site" evidence="1">
    <location>
        <position position="115"/>
    </location>
    <ligand>
        <name>Mg(2+)</name>
        <dbReference type="ChEBI" id="CHEBI:18420"/>
    </ligand>
</feature>
<feature type="strand" evidence="3">
    <location>
        <begin position="4"/>
        <end position="13"/>
    </location>
</feature>
<feature type="helix" evidence="3">
    <location>
        <begin position="15"/>
        <end position="24"/>
    </location>
</feature>
<feature type="strand" evidence="3">
    <location>
        <begin position="29"/>
        <end position="33"/>
    </location>
</feature>
<feature type="strand" evidence="3">
    <location>
        <begin position="35"/>
        <end position="42"/>
    </location>
</feature>
<feature type="strand" evidence="3">
    <location>
        <begin position="45"/>
        <end position="51"/>
    </location>
</feature>
<feature type="strand" evidence="4">
    <location>
        <begin position="53"/>
        <end position="55"/>
    </location>
</feature>
<feature type="helix" evidence="3">
    <location>
        <begin position="59"/>
        <end position="62"/>
    </location>
</feature>
<feature type="strand" evidence="3">
    <location>
        <begin position="66"/>
        <end position="70"/>
    </location>
</feature>
<feature type="helix" evidence="3">
    <location>
        <begin position="73"/>
        <end position="75"/>
    </location>
</feature>
<feature type="helix" evidence="3">
    <location>
        <begin position="76"/>
        <end position="85"/>
    </location>
</feature>
<feature type="strand" evidence="5">
    <location>
        <begin position="89"/>
        <end position="91"/>
    </location>
</feature>
<feature type="helix" evidence="3">
    <location>
        <begin position="98"/>
        <end position="100"/>
    </location>
</feature>
<feature type="strand" evidence="3">
    <location>
        <begin position="103"/>
        <end position="107"/>
    </location>
</feature>
<feature type="strand" evidence="3">
    <location>
        <begin position="113"/>
        <end position="117"/>
    </location>
</feature>
<feature type="helix" evidence="3">
    <location>
        <begin position="121"/>
        <end position="131"/>
    </location>
</feature>
<feature type="strand" evidence="3">
    <location>
        <begin position="133"/>
        <end position="137"/>
    </location>
</feature>
<reference key="1">
    <citation type="journal article" date="2004" name="Nucleic Acids Res.">
        <title>The genome sequence of Bacillus cereus ATCC 10987 reveals metabolic adaptations and a large plasmid related to Bacillus anthracis pXO1.</title>
        <authorList>
            <person name="Rasko D.A."/>
            <person name="Ravel J."/>
            <person name="Oekstad O.A."/>
            <person name="Helgason E."/>
            <person name="Cer R.Z."/>
            <person name="Jiang L."/>
            <person name="Shores K.A."/>
            <person name="Fouts D.E."/>
            <person name="Tourasse N.J."/>
            <person name="Angiuoli S.V."/>
            <person name="Kolonay J.F."/>
            <person name="Nelson W.C."/>
            <person name="Kolstoe A.-B."/>
            <person name="Fraser C.M."/>
            <person name="Read T.D."/>
        </authorList>
    </citation>
    <scope>NUCLEOTIDE SEQUENCE [LARGE SCALE GENOMIC DNA]</scope>
    <source>
        <strain>ATCC 10987 / NRS 248</strain>
    </source>
</reference>
<accession>Q739M9</accession>
<protein>
    <recommendedName>
        <fullName evidence="1">Metallothiol transferase FosB</fullName>
        <ecNumber evidence="1">2.5.1.-</ecNumber>
    </recommendedName>
    <alternativeName>
        <fullName evidence="1">Fosfomycin resistance protein</fullName>
    </alternativeName>
</protein>
<sequence>MLNGINHLCFSVSNLEDSIEFYEKVLEGELLVRGRKLAYFNICGVWVALNEEIHIPRNEIYQSYTHIAFSVEQKDFESLLQRLEENDVHILKGRERDVRDCESIYFVDPDGHKFEFHSGTLQDRLNYYREDKPHMTFY</sequence>
<name>FOSB_BACC1</name>
<gene>
    <name evidence="1" type="primary">fosB</name>
    <name type="ordered locus">BCE_2111</name>
</gene>
<proteinExistence type="evidence at protein level"/>